<organism>
    <name type="scientific">Homo sapiens</name>
    <name type="common">Human</name>
    <dbReference type="NCBI Taxonomy" id="9606"/>
    <lineage>
        <taxon>Eukaryota</taxon>
        <taxon>Metazoa</taxon>
        <taxon>Chordata</taxon>
        <taxon>Craniata</taxon>
        <taxon>Vertebrata</taxon>
        <taxon>Euteleostomi</taxon>
        <taxon>Mammalia</taxon>
        <taxon>Eutheria</taxon>
        <taxon>Euarchontoglires</taxon>
        <taxon>Primates</taxon>
        <taxon>Haplorrhini</taxon>
        <taxon>Catarrhini</taxon>
        <taxon>Hominidae</taxon>
        <taxon>Homo</taxon>
    </lineage>
</organism>
<feature type="chain" id="PRO_0000069676" description="Histamine H1 receptor">
    <location>
        <begin position="1"/>
        <end position="487"/>
    </location>
</feature>
<feature type="topological domain" description="Extracellular" evidence="7">
    <location>
        <begin position="1"/>
        <end position="29"/>
    </location>
</feature>
<feature type="transmembrane region" description="Helical; Name=1" evidence="13 16">
    <location>
        <begin position="30"/>
        <end position="50"/>
    </location>
</feature>
<feature type="topological domain" description="Cytoplasmic" evidence="7">
    <location>
        <begin position="51"/>
        <end position="64"/>
    </location>
</feature>
<feature type="transmembrane region" description="Helical; Name=2" evidence="13 16">
    <location>
        <begin position="65"/>
        <end position="89"/>
    </location>
</feature>
<feature type="topological domain" description="Extracellular" evidence="7">
    <location>
        <begin position="90"/>
        <end position="97"/>
    </location>
</feature>
<feature type="transmembrane region" description="Helical; Name=3" evidence="13 16">
    <location>
        <begin position="98"/>
        <end position="123"/>
    </location>
</feature>
<feature type="topological domain" description="Cytoplasmic" evidence="7">
    <location>
        <begin position="124"/>
        <end position="144"/>
    </location>
</feature>
<feature type="transmembrane region" description="Helical; Name=4" evidence="13 16">
    <location>
        <begin position="145"/>
        <end position="164"/>
    </location>
</feature>
<feature type="topological domain" description="Extracellular" evidence="7">
    <location>
        <begin position="165"/>
        <end position="188"/>
    </location>
</feature>
<feature type="transmembrane region" description="Helical; Name=5" evidence="13 16">
    <location>
        <begin position="189"/>
        <end position="211"/>
    </location>
</feature>
<feature type="topological domain" description="Cytoplasmic" evidence="7">
    <location>
        <begin position="212"/>
        <end position="416"/>
    </location>
</feature>
<feature type="transmembrane region" description="Helical; Name=6" evidence="13 16">
    <location>
        <begin position="417"/>
        <end position="440"/>
    </location>
</feature>
<feature type="topological domain" description="Extracellular" evidence="7">
    <location>
        <begin position="441"/>
        <end position="446"/>
    </location>
</feature>
<feature type="transmembrane region" description="Helical; Name=7" evidence="13 16">
    <location>
        <begin position="447"/>
        <end position="469"/>
    </location>
</feature>
<feature type="topological domain" description="Cytoplasmic" evidence="7">
    <location>
        <begin position="470"/>
        <end position="487"/>
    </location>
</feature>
<feature type="region of interest" description="Important for agonist binding" evidence="7">
    <location>
        <begin position="107"/>
        <end position="112"/>
    </location>
</feature>
<feature type="region of interest" description="Disordered" evidence="4">
    <location>
        <begin position="238"/>
        <end position="291"/>
    </location>
</feature>
<feature type="region of interest" description="Disordered" evidence="4">
    <location>
        <begin position="345"/>
        <end position="379"/>
    </location>
</feature>
<feature type="region of interest" description="Important for agonist binding" evidence="7">
    <location>
        <begin position="424"/>
        <end position="428"/>
    </location>
</feature>
<feature type="compositionally biased region" description="Basic and acidic residues" evidence="4">
    <location>
        <begin position="238"/>
        <end position="261"/>
    </location>
</feature>
<feature type="compositionally biased region" description="Polar residues" evidence="4">
    <location>
        <begin position="353"/>
        <end position="369"/>
    </location>
</feature>
<feature type="binding site" evidence="13">
    <location>
        <position position="107"/>
    </location>
    <ligand>
        <name>histamine</name>
        <dbReference type="ChEBI" id="CHEBI:58432"/>
    </ligand>
</feature>
<feature type="binding site" evidence="8 16">
    <location>
        <position position="112"/>
    </location>
    <ligand>
        <name>histamine</name>
        <dbReference type="ChEBI" id="CHEBI:58432"/>
    </ligand>
</feature>
<feature type="binding site" evidence="13">
    <location>
        <position position="198"/>
    </location>
    <ligand>
        <name>histamine</name>
        <dbReference type="ChEBI" id="CHEBI:58432"/>
    </ligand>
</feature>
<feature type="binding site" evidence="8 16">
    <location>
        <position position="431"/>
    </location>
    <ligand>
        <name>histamine</name>
        <dbReference type="ChEBI" id="CHEBI:58432"/>
    </ligand>
</feature>
<feature type="modified residue" description="Phosphothreonine" evidence="5">
    <location>
        <position position="140"/>
    </location>
</feature>
<feature type="modified residue" description="Phosphothreonine" evidence="5">
    <location>
        <position position="142"/>
    </location>
</feature>
<feature type="modified residue" description="Phosphoserine" evidence="18">
    <location>
        <position position="230"/>
    </location>
</feature>
<feature type="modified residue" description="Phosphothreonine" evidence="17">
    <location>
        <position position="279"/>
    </location>
</feature>
<feature type="modified residue" description="Phosphoserine" evidence="1">
    <location>
        <position position="344"/>
    </location>
</feature>
<feature type="modified residue" description="Phosphoserine" evidence="1">
    <location>
        <position position="347"/>
    </location>
</feature>
<feature type="modified residue" description="Phosphoserine" evidence="1">
    <location>
        <position position="380"/>
    </location>
</feature>
<feature type="modified residue" description="Phosphoserine" evidence="5">
    <location>
        <position position="396"/>
    </location>
</feature>
<feature type="modified residue" description="Phosphoserine" evidence="5">
    <location>
        <position position="398"/>
    </location>
</feature>
<feature type="glycosylation site" description="N-linked (GlcNAc...) asparagine" evidence="2">
    <location>
        <position position="5"/>
    </location>
</feature>
<feature type="glycosylation site" description="N-linked (GlcNAc...) asparagine" evidence="2">
    <location>
        <position position="18"/>
    </location>
</feature>
<feature type="disulfide bond" evidence="3 7">
    <location>
        <begin position="100"/>
        <end position="180"/>
    </location>
</feature>
<feature type="disulfide bond" evidence="3 7">
    <location>
        <begin position="441"/>
        <end position="444"/>
    </location>
</feature>
<feature type="sequence variant" id="VAR_049410" description="In dbSNP:rs2067466.">
    <original>K</original>
    <variation>N</variation>
    <location>
        <position position="19"/>
    </location>
</feature>
<feature type="sequence variant" id="VAR_033476" description="In dbSNP:rs7651620.">
    <original>G</original>
    <variation>E</variation>
    <location>
        <position position="270"/>
    </location>
</feature>
<feature type="sequence variant" id="VAR_035761" description="In a colorectal cancer sample; somatic mutation; dbSNP:rs1370695377." evidence="6">
    <original>D</original>
    <variation>E</variation>
    <location>
        <position position="385"/>
    </location>
</feature>
<feature type="mutagenesis site" description="No effect on activation by histamine." evidence="8">
    <original>R</original>
    <variation>A</variation>
    <location>
        <position position="56"/>
    </location>
</feature>
<feature type="mutagenesis site" description="No effect on activation by histamine." evidence="8">
    <original>K</original>
    <variation>A</variation>
    <location>
        <position position="57"/>
    </location>
</feature>
<feature type="mutagenesis site" description="No effect on activation by histamine." evidence="8">
    <original>H</original>
    <variation>A</variation>
    <location>
        <position position="59"/>
    </location>
</feature>
<feature type="mutagenesis site" description="Loss of activation by histamine." evidence="8">
    <original>D</original>
    <variation>A</variation>
    <variation>E</variation>
    <location>
        <position position="107"/>
    </location>
</feature>
<feature type="mutagenesis site" description="No effect on activation by histamine." evidence="8">
    <original>Y</original>
    <variation>F</variation>
    <location>
        <position position="108"/>
    </location>
</feature>
<feature type="mutagenesis site" description="Decreased activation by histamine." evidence="8">
    <original>Y</original>
    <variation>V</variation>
    <location>
        <position position="108"/>
    </location>
</feature>
<feature type="mutagenesis site" description="No effect on activation by histamine." evidence="8">
    <original>S</original>
    <variation>A</variation>
    <location>
        <position position="111"/>
    </location>
</feature>
<feature type="mutagenesis site" description="Decreased activation by histamine." evidence="8">
    <original>T</original>
    <variation>A</variation>
    <location>
        <position position="112"/>
    </location>
</feature>
<feature type="mutagenesis site" description="No effect on activation by histamine." evidence="8">
    <original>Y</original>
    <variation>A</variation>
    <location>
        <position position="135"/>
    </location>
</feature>
<feature type="mutagenesis site" description="No effect on activation by histamine." evidence="8">
    <original>K</original>
    <variation>A</variation>
    <location>
        <position position="137"/>
    </location>
</feature>
<feature type="mutagenesis site" description="Loss of activation by histamine." evidence="8">
    <original>W</original>
    <variation>A</variation>
    <location>
        <position position="158"/>
    </location>
</feature>
<feature type="mutagenesis site" description="Loss of activation by histamine." evidence="8">
    <original>N</original>
    <variation>A</variation>
    <location>
        <position position="198"/>
    </location>
</feature>
<feature type="mutagenesis site" description="Loss of activation by histamine." evidence="8">
    <original>W</original>
    <variation>A</variation>
    <location>
        <position position="428"/>
    </location>
</feature>
<feature type="mutagenesis site" description="Loss of activation by histamine." evidence="8">
    <original>Y</original>
    <variation>F</variation>
    <location>
        <position position="431"/>
    </location>
</feature>
<feature type="mutagenesis site" description="Increased histamine receptor activity. Constitutively active." evidence="8">
    <original>Y</original>
    <variation>R</variation>
    <location>
        <position position="431"/>
    </location>
</feature>
<feature type="mutagenesis site" description="No effect on activation by histamine." evidence="8">
    <original>F</original>
    <variation>A</variation>
    <location>
        <position position="432"/>
    </location>
</feature>
<feature type="mutagenesis site" description="Decreased activation by histamine." evidence="8">
    <original>F</original>
    <variation>A</variation>
    <location>
        <position position="435"/>
    </location>
</feature>
<feature type="mutagenesis site" description="No effect on activation by histamine." evidence="8">
    <original>I</original>
    <variation>A</variation>
    <location>
        <position position="454"/>
    </location>
</feature>
<feature type="mutagenesis site" description="Decreased activation by histamine." evidence="8">
    <original>Y</original>
    <variation>A</variation>
    <location>
        <position position="458"/>
    </location>
</feature>
<feature type="mutagenesis site" description="No effect on activation by histamine." evidence="8">
    <original>Y</original>
    <variation>F</variation>
    <location>
        <position position="458"/>
    </location>
</feature>
<feature type="sequence conflict" description="In Ref. 9; AAH60802." evidence="12" ref="9">
    <original>V</original>
    <variation>E</variation>
    <location>
        <position position="308"/>
    </location>
</feature>
<feature type="helix" evidence="21">
    <location>
        <begin position="29"/>
        <end position="54"/>
    </location>
</feature>
<feature type="strand" evidence="20">
    <location>
        <begin position="55"/>
        <end position="57"/>
    </location>
</feature>
<feature type="helix" evidence="21">
    <location>
        <begin position="62"/>
        <end position="78"/>
    </location>
</feature>
<feature type="helix" evidence="21">
    <location>
        <begin position="80"/>
        <end position="89"/>
    </location>
</feature>
<feature type="strand" evidence="21">
    <location>
        <begin position="90"/>
        <end position="92"/>
    </location>
</feature>
<feature type="helix" evidence="21">
    <location>
        <begin position="97"/>
        <end position="130"/>
    </location>
</feature>
<feature type="helix" evidence="21">
    <location>
        <begin position="132"/>
        <end position="137"/>
    </location>
</feature>
<feature type="helix" evidence="21">
    <location>
        <begin position="141"/>
        <end position="155"/>
    </location>
</feature>
<feature type="helix" evidence="21">
    <location>
        <begin position="156"/>
        <end position="158"/>
    </location>
</feature>
<feature type="helix" evidence="21">
    <location>
        <begin position="159"/>
        <end position="163"/>
    </location>
</feature>
<feature type="helix" evidence="21">
    <location>
        <begin position="165"/>
        <end position="168"/>
    </location>
</feature>
<feature type="helix" evidence="20">
    <location>
        <begin position="169"/>
        <end position="171"/>
    </location>
</feature>
<feature type="strand" evidence="19">
    <location>
        <begin position="177"/>
        <end position="180"/>
    </location>
</feature>
<feature type="helix" evidence="21">
    <location>
        <begin position="183"/>
        <end position="185"/>
    </location>
</feature>
<feature type="helix" evidence="21">
    <location>
        <begin position="188"/>
        <end position="198"/>
    </location>
</feature>
<feature type="helix" evidence="21">
    <location>
        <begin position="200"/>
        <end position="224"/>
    </location>
</feature>
<feature type="helix" evidence="21">
    <location>
        <begin position="411"/>
        <end position="441"/>
    </location>
</feature>
<feature type="strand" evidence="21">
    <location>
        <begin position="442"/>
        <end position="444"/>
    </location>
</feature>
<feature type="helix" evidence="21">
    <location>
        <begin position="447"/>
        <end position="471"/>
    </location>
</feature>
<feature type="helix" evidence="21">
    <location>
        <begin position="473"/>
        <end position="484"/>
    </location>
</feature>
<protein>
    <recommendedName>
        <fullName evidence="11">Histamine H1 receptor</fullName>
        <shortName evidence="11">H1-R</shortName>
        <shortName evidence="10">H1R</shortName>
        <shortName>HH1R</shortName>
    </recommendedName>
</protein>
<sequence length="487" mass="55784">MSLPNSSCLLEDKMCEGNKTTMASPQLMPLVVVLSTICLVTVGLNLLVLYAVRSERKLHTVGNLYIVSLSVADLIVGAVVMPMNILYLLMSKWSLGRPLCLFWLSMDYVASTASIFSVFILCIDRYRSVQQPLRYLKYRTKTRASATILGAWFLSFLWVIPILGWNHFMQQTSVRREDKCETDFYDVTWFKVMTAIINFYLPTLLMLWFYAKIYKAVRQHCQHRELINRSLPSFSEIKLRPENPKGDAKKPGKESPWEVLKRKPKDAGGGSVLKSPSQTPKEMKSPVVFSQEDDREVDKLYCFPLDIVHMQAAAEGSSRDYVAVNRSHGQLKTDEQGLNTHGASEISEDQMLGDSQSFSRTDSDTTTETAPGKGKLRSGSNTGLDYIKFTWKRLRSHSRQYVSGLHMNRERKAAKQLGFIMAAFILCWIPYFIFFMVIAFCKNCCNEHLHMFTIWLGYINSTLNPLIYPLCNENFKKTFKRILHIRS</sequence>
<comment type="function">
    <text evidence="1 8 9">G-protein-coupled receptor for histamine, a biogenic amine that functions as an immune modulator and a neurotransmitter (PubMed:33828102, PubMed:8280179). Through the H1 receptor, histamine mediates the contraction of smooth muscles and increases capillary permeability due to contraction of terminal venules. Also mediates neurotransmission in the central nervous system and thereby regulates circadian rhythms, emotional and locomotor activities as well as cognitive functions (By similarity).</text>
</comment>
<comment type="subcellular location">
    <subcellularLocation>
        <location evidence="7">Cell membrane</location>
        <topology evidence="7">Multi-pass membrane protein</topology>
    </subcellularLocation>
</comment>
<comment type="domain">
    <text evidence="8">Histamine activates the receptor by forming hydrogen bonds with transmembrane domains 3 and 6, squashing the ligand-binding pocket on the extracellular side and opening the cavity for G-protein engagement on the intracellular side.</text>
</comment>
<comment type="PTM">
    <text evidence="5">Phosphorylation at sites in the second and third cytoplasmic loops independently contribute to agonist-induced receptor down-regulation.</text>
</comment>
<comment type="similarity">
    <text evidence="3">Belongs to the G-protein coupled receptor 1 family.</text>
</comment>
<gene>
    <name evidence="14" type="primary">HRH1</name>
</gene>
<keyword id="KW-0002">3D-structure</keyword>
<keyword id="KW-1003">Cell membrane</keyword>
<keyword id="KW-1015">Disulfide bond</keyword>
<keyword id="KW-0297">G-protein coupled receptor</keyword>
<keyword id="KW-0325">Glycoprotein</keyword>
<keyword id="KW-0472">Membrane</keyword>
<keyword id="KW-0597">Phosphoprotein</keyword>
<keyword id="KW-1267">Proteomics identification</keyword>
<keyword id="KW-0675">Receptor</keyword>
<keyword id="KW-1185">Reference proteome</keyword>
<keyword id="KW-0807">Transducer</keyword>
<keyword id="KW-0812">Transmembrane</keyword>
<keyword id="KW-1133">Transmembrane helix</keyword>
<dbReference type="EMBL" id="Z34897">
    <property type="protein sequence ID" value="CAA84380.1"/>
    <property type="molecule type" value="mRNA"/>
</dbReference>
<dbReference type="EMBL" id="X76786">
    <property type="protein sequence ID" value="CAA54182.1"/>
    <property type="molecule type" value="Genomic_DNA"/>
</dbReference>
<dbReference type="EMBL" id="D14436">
    <property type="protein sequence ID" value="BAA03319.1"/>
    <property type="molecule type" value="Genomic_DNA"/>
</dbReference>
<dbReference type="EMBL" id="D28481">
    <property type="protein sequence ID" value="BAA05840.1"/>
    <property type="molecule type" value="mRNA"/>
</dbReference>
<dbReference type="EMBL" id="AF026261">
    <property type="protein sequence ID" value="AAB95156.1"/>
    <property type="molecule type" value="mRNA"/>
</dbReference>
<dbReference type="EMBL" id="AB041380">
    <property type="protein sequence ID" value="BAA94465.1"/>
    <property type="molecule type" value="Genomic_DNA"/>
</dbReference>
<dbReference type="EMBL" id="AY136743">
    <property type="protein sequence ID" value="AAN01269.1"/>
    <property type="molecule type" value="mRNA"/>
</dbReference>
<dbReference type="EMBL" id="AK289412">
    <property type="protein sequence ID" value="BAF82101.1"/>
    <property type="molecule type" value="mRNA"/>
</dbReference>
<dbReference type="EMBL" id="CH471055">
    <property type="protein sequence ID" value="EAW64092.1"/>
    <property type="molecule type" value="Genomic_DNA"/>
</dbReference>
<dbReference type="EMBL" id="BC060802">
    <property type="protein sequence ID" value="AAH60802.1"/>
    <property type="molecule type" value="mRNA"/>
</dbReference>
<dbReference type="CCDS" id="CCDS2604.1"/>
<dbReference type="PIR" id="JC2495">
    <property type="entry name" value="JC2495"/>
</dbReference>
<dbReference type="RefSeq" id="NP_000852.1">
    <property type="nucleotide sequence ID" value="NM_000861.3"/>
</dbReference>
<dbReference type="RefSeq" id="NP_001091681.1">
    <property type="nucleotide sequence ID" value="NM_001098211.2"/>
</dbReference>
<dbReference type="RefSeq" id="NP_001091682.1">
    <property type="nucleotide sequence ID" value="NM_001098212.2"/>
</dbReference>
<dbReference type="RefSeq" id="NP_001091683.1">
    <property type="nucleotide sequence ID" value="NM_001098213.2"/>
</dbReference>
<dbReference type="RefSeq" id="XP_011531954.1">
    <property type="nucleotide sequence ID" value="XM_011533652.1"/>
</dbReference>
<dbReference type="RefSeq" id="XP_011531955.1">
    <property type="nucleotide sequence ID" value="XM_011533653.2"/>
</dbReference>
<dbReference type="RefSeq" id="XP_016861772.1">
    <property type="nucleotide sequence ID" value="XM_017006283.1"/>
</dbReference>
<dbReference type="RefSeq" id="XP_016861773.1">
    <property type="nucleotide sequence ID" value="XM_017006284.1"/>
</dbReference>
<dbReference type="PDB" id="3RZE">
    <property type="method" value="X-ray"/>
    <property type="resolution" value="3.10 A"/>
    <property type="chains" value="A=20-221, A=405-487"/>
</dbReference>
<dbReference type="PDB" id="7DFL">
    <property type="method" value="EM"/>
    <property type="resolution" value="3.30 A"/>
    <property type="chains" value="R=1-487"/>
</dbReference>
<dbReference type="PDB" id="8YN2">
    <property type="method" value="EM"/>
    <property type="resolution" value="2.66 A"/>
    <property type="chains" value="R=1-487"/>
</dbReference>
<dbReference type="PDBsum" id="3RZE"/>
<dbReference type="PDBsum" id="7DFL"/>
<dbReference type="PDBsum" id="8YN2"/>
<dbReference type="EMDB" id="EMD-30665"/>
<dbReference type="EMDB" id="EMD-38074"/>
<dbReference type="EMDB" id="EMD-39412"/>
<dbReference type="SMR" id="P35367"/>
<dbReference type="BioGRID" id="109505">
    <property type="interactions" value="19"/>
</dbReference>
<dbReference type="CORUM" id="P35367"/>
<dbReference type="DIP" id="DIP-41996N"/>
<dbReference type="FunCoup" id="P35367">
    <property type="interactions" value="1004"/>
</dbReference>
<dbReference type="IntAct" id="P35367">
    <property type="interactions" value="15"/>
</dbReference>
<dbReference type="MINT" id="P35367"/>
<dbReference type="STRING" id="9606.ENSP00000380247"/>
<dbReference type="BindingDB" id="P35367"/>
<dbReference type="ChEMBL" id="CHEMBL231"/>
<dbReference type="DrugBank" id="DB01615">
    <property type="generic name" value="Aceprometazine"/>
</dbReference>
<dbReference type="DrugBank" id="DB09488">
    <property type="generic name" value="Acrivastine"/>
</dbReference>
<dbReference type="DrugBank" id="DB06766">
    <property type="generic name" value="Alcaftadine"/>
</dbReference>
<dbReference type="DrugBank" id="DB01246">
    <property type="generic name" value="Alimemazine"/>
</dbReference>
<dbReference type="DrugBank" id="DB00321">
    <property type="generic name" value="Amitriptyline"/>
</dbReference>
<dbReference type="DrugBank" id="DB00543">
    <property type="generic name" value="Amoxapine"/>
</dbReference>
<dbReference type="DrugBank" id="DB08799">
    <property type="generic name" value="Antazoline"/>
</dbReference>
<dbReference type="DrugBank" id="DB01238">
    <property type="generic name" value="Aripiprazole"/>
</dbReference>
<dbReference type="DrugBank" id="DB14185">
    <property type="generic name" value="Aripiprazole lauroxil"/>
</dbReference>
<dbReference type="DrugBank" id="DB06216">
    <property type="generic name" value="Asenapine"/>
</dbReference>
<dbReference type="DrugBank" id="DB00637">
    <property type="generic name" value="Astemizole"/>
</dbReference>
<dbReference type="DrugBank" id="DB19381">
    <property type="generic name" value="AZACYCLONOL"/>
</dbReference>
<dbReference type="DrugBank" id="DB00719">
    <property type="generic name" value="Azatadine"/>
</dbReference>
<dbReference type="DrugBank" id="DB00972">
    <property type="generic name" value="Azelastine"/>
</dbReference>
<dbReference type="DrugBank" id="DB00245">
    <property type="generic name" value="Benzatropine"/>
</dbReference>
<dbReference type="DrugBank" id="DB00767">
    <property type="generic name" value="Benzquinamide"/>
</dbReference>
<dbReference type="DrugBank" id="DB04890">
    <property type="generic name" value="Bepotastine"/>
</dbReference>
<dbReference type="DrugBank" id="DB06698">
    <property type="generic name" value="Betahistine"/>
</dbReference>
<dbReference type="DrugBank" id="DB11591">
    <property type="generic name" value="Bilastine"/>
</dbReference>
<dbReference type="DrugBank" id="DB09128">
    <property type="generic name" value="Brexpiprazole"/>
</dbReference>
<dbReference type="DrugBank" id="DB01237">
    <property type="generic name" value="Bromodiphenhydramine"/>
</dbReference>
<dbReference type="DrugBank" id="DB00835">
    <property type="generic name" value="Brompheniramine"/>
</dbReference>
<dbReference type="DrugBank" id="DB00354">
    <property type="generic name" value="Buclizine"/>
</dbReference>
<dbReference type="DrugBank" id="DB09016">
    <property type="generic name" value="Butriptyline"/>
</dbReference>
<dbReference type="DrugBank" id="DB00748">
    <property type="generic name" value="Carbinoxamine"/>
</dbReference>
<dbReference type="DrugBank" id="DB06016">
    <property type="generic name" value="Cariprazine"/>
</dbReference>
<dbReference type="DrugBank" id="DB00341">
    <property type="generic name" value="Cetirizine"/>
</dbReference>
<dbReference type="DrugBank" id="DB08936">
    <property type="generic name" value="Chlorcyclizine"/>
</dbReference>
<dbReference type="DrugBank" id="DB08800">
    <property type="generic name" value="Chloropyramine"/>
</dbReference>
<dbReference type="DrugBank" id="DB01114">
    <property type="generic name" value="Chlorpheniramine"/>
</dbReference>
<dbReference type="DrugBank" id="DB00477">
    <property type="generic name" value="Chlorpromazine"/>
</dbReference>
<dbReference type="DrugBank" id="DB01239">
    <property type="generic name" value="Chlorprothixene"/>
</dbReference>
<dbReference type="DrugBank" id="DB00568">
    <property type="generic name" value="Cinnarizine"/>
</dbReference>
<dbReference type="DrugBank" id="DB00215">
    <property type="generic name" value="Citalopram"/>
</dbReference>
<dbReference type="DrugBank" id="DB00283">
    <property type="generic name" value="Clemastine"/>
</dbReference>
<dbReference type="DrugBank" id="DB04837">
    <property type="generic name" value="Clofedanol"/>
</dbReference>
<dbReference type="DrugBank" id="DB15971">
    <property type="generic name" value="Clorotepine"/>
</dbReference>
<dbReference type="DrugBank" id="DB00363">
    <property type="generic name" value="Clozapine"/>
</dbReference>
<dbReference type="DrugBank" id="DB01176">
    <property type="generic name" value="Cyclizine"/>
</dbReference>
<dbReference type="DrugBank" id="DB00434">
    <property type="generic name" value="Cyproheptadine"/>
</dbReference>
<dbReference type="DrugBank" id="DB01151">
    <property type="generic name" value="Desipramine"/>
</dbReference>
<dbReference type="DrugBank" id="DB00967">
    <property type="generic name" value="Desloratadine"/>
</dbReference>
<dbReference type="DrugBank" id="DB00405">
    <property type="generic name" value="Dexbrompheniramine"/>
</dbReference>
<dbReference type="DrugBank" id="DB09555">
    <property type="generic name" value="Dexchlorpheniramine maleate"/>
</dbReference>
<dbReference type="DrugBank" id="DB00985">
    <property type="generic name" value="Dimenhydrinate"/>
</dbReference>
<dbReference type="DrugBank" id="DB08801">
    <property type="generic name" value="Dimetindene"/>
</dbReference>
<dbReference type="DrugBank" id="DB01075">
    <property type="generic name" value="Diphenhydramine"/>
</dbReference>
<dbReference type="DrugBank" id="DB01146">
    <property type="generic name" value="Diphenylpyraline"/>
</dbReference>
<dbReference type="DrugBank" id="DB09167">
    <property type="generic name" value="Dosulepin"/>
</dbReference>
<dbReference type="DrugBank" id="DB01142">
    <property type="generic name" value="Doxepin"/>
</dbReference>
<dbReference type="DrugBank" id="DB00366">
    <property type="generic name" value="Doxylamine"/>
</dbReference>
<dbReference type="DrugBank" id="DB01084">
    <property type="generic name" value="Emedastine"/>
</dbReference>
<dbReference type="DrugBank" id="DB05492">
    <property type="generic name" value="Epicept NP-1"/>
</dbReference>
<dbReference type="DrugBank" id="DB00751">
    <property type="generic name" value="Epinastine"/>
</dbReference>
<dbReference type="DrugBank" id="DB01175">
    <property type="generic name" value="Escitalopram"/>
</dbReference>
<dbReference type="DrugBank" id="DB06678">
    <property type="generic name" value="Esmirtazapine"/>
</dbReference>
<dbReference type="DrugBank" id="DB00950">
    <property type="generic name" value="Fexofenadine"/>
</dbReference>
<dbReference type="DrugBank" id="DB04841">
    <property type="generic name" value="Flunarizine"/>
</dbReference>
<dbReference type="DrugBank" id="DB12806">
    <property type="generic name" value="GSK-1004723"/>
</dbReference>
<dbReference type="DrugBank" id="DB00502">
    <property type="generic name" value="Haloperidol"/>
</dbReference>
<dbReference type="DrugBank" id="DB05381">
    <property type="generic name" value="Histamine"/>
</dbReference>
<dbReference type="DrugBank" id="DB05079">
    <property type="generic name" value="HY10275"/>
</dbReference>
<dbReference type="DrugBank" id="DB00557">
    <property type="generic name" value="Hydroxyzine"/>
</dbReference>
<dbReference type="DrugBank" id="DB04946">
    <property type="generic name" value="Iloperidone"/>
</dbReference>
<dbReference type="DrugBank" id="DB00458">
    <property type="generic name" value="Imipramine"/>
</dbReference>
<dbReference type="DrugBank" id="DB08802">
    <property type="generic name" value="Isothipendyl"/>
</dbReference>
<dbReference type="DrugBank" id="DB00920">
    <property type="generic name" value="Ketotifen"/>
</dbReference>
<dbReference type="DrugBank" id="DB00555">
    <property type="generic name" value="Lamotrigine"/>
</dbReference>
<dbReference type="DrugBank" id="DB11725">
    <property type="generic name" value="Latrepirdine"/>
</dbReference>
<dbReference type="DrugBank" id="DB01106">
    <property type="generic name" value="Levocabastine"/>
</dbReference>
<dbReference type="DrugBank" id="DB06282">
    <property type="generic name" value="Levocetirizine"/>
</dbReference>
<dbReference type="DrugBank" id="DB00455">
    <property type="generic name" value="Loratadine"/>
</dbReference>
<dbReference type="DrugBank" id="DB09195">
    <property type="generic name" value="Lorpiprazole"/>
</dbReference>
<dbReference type="DrugBank" id="DB00408">
    <property type="generic name" value="Loxapine"/>
</dbReference>
<dbReference type="DrugBank" id="DB15092">
    <property type="generic name" value="LY-2624803"/>
</dbReference>
<dbReference type="DrugBank" id="DB00934">
    <property type="generic name" value="Maprotiline"/>
</dbReference>
<dbReference type="DrugBank" id="DB00737">
    <property type="generic name" value="Meclizine"/>
</dbReference>
<dbReference type="DrugBank" id="DB06691">
    <property type="generic name" value="Mepyramine"/>
</dbReference>
<dbReference type="DrugBank" id="DB01071">
    <property type="generic name" value="Mequitazine"/>
</dbReference>
<dbReference type="DrugBank" id="DB00902">
    <property type="generic name" value="Methdilazine"/>
</dbReference>
<dbReference type="DrugBank" id="DB01403">
    <property type="generic name" value="Methotrimeprazine"/>
</dbReference>
<dbReference type="DrugBank" id="DB06148">
    <property type="generic name" value="Mianserin"/>
</dbReference>
<dbReference type="DrugBank" id="DB00370">
    <property type="generic name" value="Mirtazapine"/>
</dbReference>
<dbReference type="DrugBank" id="DB12523">
    <property type="generic name" value="Mizolastine"/>
</dbReference>
<dbReference type="DrugBank" id="DB00540">
    <property type="generic name" value="Nortriptyline"/>
</dbReference>
<dbReference type="DrugBank" id="DB05080">
    <property type="generic name" value="OBE101"/>
</dbReference>
<dbReference type="DrugBank" id="DB06229">
    <property type="generic name" value="Ocaperidone"/>
</dbReference>
<dbReference type="DrugBank" id="DB00334">
    <property type="generic name" value="Olanzapine"/>
</dbReference>
<dbReference type="DrugBank" id="DB00768">
    <property type="generic name" value="Olopatadine"/>
</dbReference>
<dbReference type="DrugBank" id="DB01173">
    <property type="generic name" value="Orphenadrine"/>
</dbReference>
<dbReference type="DrugBank" id="DB12877">
    <property type="generic name" value="Oxatomide"/>
</dbReference>
<dbReference type="DrugBank" id="DB01267">
    <property type="generic name" value="Paliperidone"/>
</dbReference>
<dbReference type="DrugBank" id="DB00715">
    <property type="generic name" value="Paroxetine"/>
</dbReference>
<dbReference type="DrugBank" id="DB00885">
    <property type="generic name" value="Pemirolast"/>
</dbReference>
<dbReference type="DrugBank" id="DB08922">
    <property type="generic name" value="Perospirone"/>
</dbReference>
<dbReference type="DrugBank" id="DB01619">
    <property type="generic name" value="Phenindamine"/>
</dbReference>
<dbReference type="DrugBank" id="DB01620">
    <property type="generic name" value="Pheniramine"/>
</dbReference>
<dbReference type="DrugBank" id="DB06153">
    <property type="generic name" value="Pizotifen"/>
</dbReference>
<dbReference type="DrugBank" id="DB00433">
    <property type="generic name" value="Prochlorperazine"/>
</dbReference>
<dbReference type="DrugBank" id="DB00392">
    <property type="generic name" value="Profenamine"/>
</dbReference>
<dbReference type="DrugBank" id="DB00420">
    <property type="generic name" value="Promazine"/>
</dbReference>
<dbReference type="DrugBank" id="DB01069">
    <property type="generic name" value="Promethazine"/>
</dbReference>
<dbReference type="DrugBank" id="DB00777">
    <property type="generic name" value="Propiomazine"/>
</dbReference>
<dbReference type="DrugBank" id="DB01224">
    <property type="generic name" value="Quetiapine"/>
</dbReference>
<dbReference type="DrugBank" id="DB00912">
    <property type="generic name" value="Repaglinide"/>
</dbReference>
<dbReference type="DrugBank" id="DB00734">
    <property type="generic name" value="Risperidone"/>
</dbReference>
<dbReference type="DrugBank" id="DB11614">
    <property type="generic name" value="Rupatadine"/>
</dbReference>
<dbReference type="DrugBank" id="DB05345">
    <property type="generic name" value="SO-101"/>
</dbReference>
<dbReference type="DrugBank" id="DB06457">
    <property type="generic name" value="Tecastemizole"/>
</dbReference>
<dbReference type="DrugBank" id="DB00342">
    <property type="generic name" value="Terfenadine"/>
</dbReference>
<dbReference type="DrugBank" id="DB04905">
    <property type="generic name" value="Tesmilifene"/>
</dbReference>
<dbReference type="DrugBank" id="DB11235">
    <property type="generic name" value="Thonzylamine"/>
</dbReference>
<dbReference type="DrugBank" id="DB00797">
    <property type="generic name" value="Tolazoline"/>
</dbReference>
<dbReference type="DrugBank" id="DB07615">
    <property type="generic name" value="Tranilast"/>
</dbReference>
<dbReference type="DrugBank" id="DB00656">
    <property type="generic name" value="Trazodone"/>
</dbReference>
<dbReference type="DrugBank" id="DB00726">
    <property type="generic name" value="Trimipramine"/>
</dbReference>
<dbReference type="DrugBank" id="DB00792">
    <property type="generic name" value="Tripelennamine"/>
</dbReference>
<dbReference type="DrugBank" id="DB00427">
    <property type="generic name" value="Triprolidine"/>
</dbReference>
<dbReference type="DrugBank" id="DB05738">
    <property type="generic name" value="Vapitadine"/>
</dbReference>
<dbReference type="DrugBank" id="DB09185">
    <property type="generic name" value="Viloxazine"/>
</dbReference>
<dbReference type="DrugBank" id="DB00246">
    <property type="generic name" value="Ziprasidone"/>
</dbReference>
<dbReference type="DrugBank" id="DB01624">
    <property type="generic name" value="Zuclopenthixol"/>
</dbReference>
<dbReference type="DrugCentral" id="P35367"/>
<dbReference type="GuidetoPHARMACOLOGY" id="262"/>
<dbReference type="GlyCosmos" id="P35367">
    <property type="glycosylation" value="2 sites, No reported glycans"/>
</dbReference>
<dbReference type="GlyGen" id="P35367">
    <property type="glycosylation" value="4 sites, 1 N-linked glycan (1 site), 1 O-linked glycan (2 sites)"/>
</dbReference>
<dbReference type="iPTMnet" id="P35367"/>
<dbReference type="PhosphoSitePlus" id="P35367"/>
<dbReference type="BioMuta" id="HRH1"/>
<dbReference type="DMDM" id="547645"/>
<dbReference type="jPOST" id="P35367"/>
<dbReference type="MassIVE" id="P35367"/>
<dbReference type="PaxDb" id="9606-ENSP00000380247"/>
<dbReference type="PeptideAtlas" id="P35367"/>
<dbReference type="ProteomicsDB" id="55036"/>
<dbReference type="Antibodypedia" id="10679">
    <property type="antibodies" value="538 antibodies from 37 providers"/>
</dbReference>
<dbReference type="DNASU" id="3269"/>
<dbReference type="Ensembl" id="ENST00000397056.1">
    <property type="protein sequence ID" value="ENSP00000380247.1"/>
    <property type="gene ID" value="ENSG00000196639.7"/>
</dbReference>
<dbReference type="Ensembl" id="ENST00000431010.3">
    <property type="protein sequence ID" value="ENSP00000397028.2"/>
    <property type="gene ID" value="ENSG00000196639.7"/>
</dbReference>
<dbReference type="Ensembl" id="ENST00000438284.2">
    <property type="protein sequence ID" value="ENSP00000406705.2"/>
    <property type="gene ID" value="ENSG00000196639.7"/>
</dbReference>
<dbReference type="GeneID" id="3269"/>
<dbReference type="KEGG" id="hsa:3269"/>
<dbReference type="MANE-Select" id="ENST00000431010.3">
    <property type="protein sequence ID" value="ENSP00000397028.2"/>
    <property type="RefSeq nucleotide sequence ID" value="NM_001098212.2"/>
    <property type="RefSeq protein sequence ID" value="NP_001091682.1"/>
</dbReference>
<dbReference type="UCSC" id="uc003bwb.5">
    <property type="organism name" value="human"/>
</dbReference>
<dbReference type="AGR" id="HGNC:5182"/>
<dbReference type="CTD" id="3269"/>
<dbReference type="DisGeNET" id="3269"/>
<dbReference type="GeneCards" id="HRH1"/>
<dbReference type="HGNC" id="HGNC:5182">
    <property type="gene designation" value="HRH1"/>
</dbReference>
<dbReference type="HPA" id="ENSG00000196639">
    <property type="expression patterns" value="Low tissue specificity"/>
</dbReference>
<dbReference type="MIM" id="600167">
    <property type="type" value="gene"/>
</dbReference>
<dbReference type="neXtProt" id="NX_P35367"/>
<dbReference type="OpenTargets" id="ENSG00000196639"/>
<dbReference type="PharmGKB" id="PA29456"/>
<dbReference type="VEuPathDB" id="HostDB:ENSG00000196639"/>
<dbReference type="eggNOG" id="KOG4220">
    <property type="taxonomic scope" value="Eukaryota"/>
</dbReference>
<dbReference type="GeneTree" id="ENSGT00940000160690"/>
<dbReference type="HOGENOM" id="CLU_009579_11_2_1"/>
<dbReference type="InParanoid" id="P35367"/>
<dbReference type="OMA" id="ITFMVMA"/>
<dbReference type="OrthoDB" id="10071887at2759"/>
<dbReference type="PAN-GO" id="P35367">
    <property type="GO annotations" value="6 GO annotations based on evolutionary models"/>
</dbReference>
<dbReference type="PhylomeDB" id="P35367"/>
<dbReference type="TreeFam" id="TF333432"/>
<dbReference type="PathwayCommons" id="P35367"/>
<dbReference type="Reactome" id="R-HSA-390650">
    <property type="pathway name" value="Histamine receptors"/>
</dbReference>
<dbReference type="Reactome" id="R-HSA-416476">
    <property type="pathway name" value="G alpha (q) signalling events"/>
</dbReference>
<dbReference type="SignaLink" id="P35367"/>
<dbReference type="SIGNOR" id="P35367"/>
<dbReference type="BioGRID-ORCS" id="3269">
    <property type="hits" value="14 hits in 1162 CRISPR screens"/>
</dbReference>
<dbReference type="ChiTaRS" id="HRH1">
    <property type="organism name" value="human"/>
</dbReference>
<dbReference type="EvolutionaryTrace" id="P35367"/>
<dbReference type="GeneWiki" id="Histamine_H1_receptor"/>
<dbReference type="GenomeRNAi" id="3269"/>
<dbReference type="Pharos" id="P35367">
    <property type="development level" value="Tclin"/>
</dbReference>
<dbReference type="PRO" id="PR:P35367"/>
<dbReference type="Proteomes" id="UP000005640">
    <property type="component" value="Chromosome 3"/>
</dbReference>
<dbReference type="RNAct" id="P35367">
    <property type="molecule type" value="protein"/>
</dbReference>
<dbReference type="Bgee" id="ENSG00000196639">
    <property type="expression patterns" value="Expressed in cartilage tissue and 166 other cell types or tissues"/>
</dbReference>
<dbReference type="ExpressionAtlas" id="P35367">
    <property type="expression patterns" value="baseline and differential"/>
</dbReference>
<dbReference type="GO" id="GO:0005829">
    <property type="term" value="C:cytosol"/>
    <property type="evidence" value="ECO:0000314"/>
    <property type="project" value="HPA"/>
</dbReference>
<dbReference type="GO" id="GO:0030425">
    <property type="term" value="C:dendrite"/>
    <property type="evidence" value="ECO:0000318"/>
    <property type="project" value="GO_Central"/>
</dbReference>
<dbReference type="GO" id="GO:0005886">
    <property type="term" value="C:plasma membrane"/>
    <property type="evidence" value="ECO:0000314"/>
    <property type="project" value="HPA"/>
</dbReference>
<dbReference type="GO" id="GO:0045202">
    <property type="term" value="C:synapse"/>
    <property type="evidence" value="ECO:0007669"/>
    <property type="project" value="GOC"/>
</dbReference>
<dbReference type="GO" id="GO:0004969">
    <property type="term" value="F:histamine receptor activity"/>
    <property type="evidence" value="ECO:0000314"/>
    <property type="project" value="UniProt"/>
</dbReference>
<dbReference type="GO" id="GO:0071420">
    <property type="term" value="P:cellular response to histamine"/>
    <property type="evidence" value="ECO:0000314"/>
    <property type="project" value="UniProt"/>
</dbReference>
<dbReference type="GO" id="GO:0007268">
    <property type="term" value="P:chemical synaptic transmission"/>
    <property type="evidence" value="ECO:0000318"/>
    <property type="project" value="GO_Central"/>
</dbReference>
<dbReference type="GO" id="GO:0007186">
    <property type="term" value="P:G protein-coupled receptor signaling pathway"/>
    <property type="evidence" value="ECO:0000314"/>
    <property type="project" value="UniProt"/>
</dbReference>
<dbReference type="GO" id="GO:0007187">
    <property type="term" value="P:G protein-coupled receptor signaling pathway, coupled to cyclic nucleotide second messenger"/>
    <property type="evidence" value="ECO:0000318"/>
    <property type="project" value="GO_Central"/>
</dbReference>
<dbReference type="GO" id="GO:0006954">
    <property type="term" value="P:inflammatory response"/>
    <property type="evidence" value="ECO:0000250"/>
    <property type="project" value="BHF-UCL"/>
</dbReference>
<dbReference type="GO" id="GO:0007613">
    <property type="term" value="P:memory"/>
    <property type="evidence" value="ECO:0007669"/>
    <property type="project" value="Ensembl"/>
</dbReference>
<dbReference type="GO" id="GO:0007200">
    <property type="term" value="P:phospholipase C-activating G protein-coupled receptor signaling pathway"/>
    <property type="evidence" value="ECO:0000250"/>
    <property type="project" value="BHF-UCL"/>
</dbReference>
<dbReference type="GO" id="GO:0045907">
    <property type="term" value="P:positive regulation of vasoconstriction"/>
    <property type="evidence" value="ECO:0007669"/>
    <property type="project" value="InterPro"/>
</dbReference>
<dbReference type="GO" id="GO:0048167">
    <property type="term" value="P:regulation of synaptic plasticity"/>
    <property type="evidence" value="ECO:0007669"/>
    <property type="project" value="Ensembl"/>
</dbReference>
<dbReference type="GO" id="GO:0043114">
    <property type="term" value="P:regulation of vascular permeability"/>
    <property type="evidence" value="ECO:0007669"/>
    <property type="project" value="InterPro"/>
</dbReference>
<dbReference type="GO" id="GO:0008542">
    <property type="term" value="P:visual learning"/>
    <property type="evidence" value="ECO:0007669"/>
    <property type="project" value="Ensembl"/>
</dbReference>
<dbReference type="CDD" id="cd15050">
    <property type="entry name" value="7tmA_Histamine_H1R"/>
    <property type="match status" value="1"/>
</dbReference>
<dbReference type="FunFam" id="1.20.1070.10:FF:000147">
    <property type="entry name" value="Histamine H1 receptor"/>
    <property type="match status" value="1"/>
</dbReference>
<dbReference type="FunFam" id="1.20.1070.10:FF:000189">
    <property type="entry name" value="Histamine H1 receptor"/>
    <property type="match status" value="1"/>
</dbReference>
<dbReference type="Gene3D" id="1.20.1070.10">
    <property type="entry name" value="Rhodopsin 7-helix transmembrane proteins"/>
    <property type="match status" value="2"/>
</dbReference>
<dbReference type="InterPro" id="IPR000276">
    <property type="entry name" value="GPCR_Rhodpsn"/>
</dbReference>
<dbReference type="InterPro" id="IPR017452">
    <property type="entry name" value="GPCR_Rhodpsn_7TM"/>
</dbReference>
<dbReference type="InterPro" id="IPR000921">
    <property type="entry name" value="Histamine_H1_rcpt"/>
</dbReference>
<dbReference type="PANTHER" id="PTHR24247">
    <property type="entry name" value="5-HYDROXYTRYPTAMINE RECEPTOR"/>
    <property type="match status" value="1"/>
</dbReference>
<dbReference type="PANTHER" id="PTHR24247:SF223">
    <property type="entry name" value="HISTAMINE H1 RECEPTOR"/>
    <property type="match status" value="1"/>
</dbReference>
<dbReference type="Pfam" id="PF00001">
    <property type="entry name" value="7tm_1"/>
    <property type="match status" value="1"/>
</dbReference>
<dbReference type="PRINTS" id="PR00237">
    <property type="entry name" value="GPCRRHODOPSN"/>
</dbReference>
<dbReference type="PRINTS" id="PR00530">
    <property type="entry name" value="HISTAMINEH1R"/>
</dbReference>
<dbReference type="SMART" id="SM01381">
    <property type="entry name" value="7TM_GPCR_Srsx"/>
    <property type="match status" value="1"/>
</dbReference>
<dbReference type="SUPFAM" id="SSF81321">
    <property type="entry name" value="Family A G protein-coupled receptor-like"/>
    <property type="match status" value="1"/>
</dbReference>
<dbReference type="PROSITE" id="PS00237">
    <property type="entry name" value="G_PROTEIN_RECEP_F1_1"/>
    <property type="match status" value="1"/>
</dbReference>
<dbReference type="PROSITE" id="PS50262">
    <property type="entry name" value="G_PROTEIN_RECEP_F1_2"/>
    <property type="match status" value="1"/>
</dbReference>
<accession>P35367</accession>
<accession>A8K047</accession>
<accession>Q6P9E5</accession>
<proteinExistence type="evidence at protein level"/>
<reference key="1">
    <citation type="journal article" date="1993" name="Biochem. Biophys. Res. Commun.">
        <title>Genomic cloning, heterologous expression and pharmacological characterization of a human histamine H1 receptor.</title>
        <authorList>
            <person name="de Backer M.D."/>
            <person name="Gommeren W."/>
            <person name="Moereels H."/>
            <person name="Nobels G."/>
            <person name="van Gompel P."/>
            <person name="Leysen J.E."/>
            <person name="Luyten W.H.M.L."/>
        </authorList>
    </citation>
    <scope>NUCLEOTIDE SEQUENCE [MRNA]</scope>
    <scope>FUNCTION</scope>
</reference>
<reference key="2">
    <citation type="journal article" date="1994" name="Biochem. Biophys. Res. Commun.">
        <title>Molecular cloning of the human histamine H1 receptor gene.</title>
        <authorList>
            <person name="Fukui K."/>
            <person name="Fujimoto K."/>
            <person name="Mizuguchi H."/>
            <person name="Sakamoto K."/>
            <person name="Horio Y."/>
            <person name="Takai S."/>
            <person name="Yamada K."/>
            <person name="Ito S."/>
        </authorList>
    </citation>
    <scope>NUCLEOTIDE SEQUENCE [GENOMIC DNA]</scope>
</reference>
<reference key="3">
    <citation type="journal article" date="1994" name="Eur. J. Biochem.">
        <title>Stable expression of human H1-histamine-receptor cDNA in Chinese hamster ovary cells. Pharmacological characterisation of the protein, tissue distribution of messenger RNA and chromosomal localisation of the gene.</title>
        <authorList>
            <person name="Moguilevsky N."/>
            <person name="Varsalona F."/>
            <person name="Noyer M."/>
            <person name="Gillard M."/>
            <person name="Guillaume J.P."/>
            <person name="Garcia L."/>
            <person name="Szpirer C."/>
            <person name="Szpirer J."/>
            <person name="Bollen A."/>
        </authorList>
    </citation>
    <scope>NUCLEOTIDE SEQUENCE [MRNA]</scope>
</reference>
<reference key="4">
    <citation type="submission" date="1997-09" db="EMBL/GenBank/DDBJ databases">
        <authorList>
            <person name="Rae J.L."/>
            <person name="Shepard A.R."/>
        </authorList>
    </citation>
    <scope>NUCLEOTIDE SEQUENCE [MRNA]</scope>
    <source>
        <tissue>Lens epithelium</tissue>
    </source>
</reference>
<reference key="5">
    <citation type="journal article" date="2004" name="Mol. Biol. Evol.">
        <title>Human-specific amino acid changes found in 103 protein-coding genes.</title>
        <authorList>
            <person name="Kitano T."/>
            <person name="Liu Y.-H."/>
            <person name="Ueda S."/>
            <person name="Saitou N."/>
        </authorList>
    </citation>
    <scope>NUCLEOTIDE SEQUENCE [GENOMIC DNA]</scope>
</reference>
<reference key="6">
    <citation type="submission" date="2002-07" db="EMBL/GenBank/DDBJ databases">
        <title>cDNA clones of human proteins involved in signal transduction sequenced by the Guthrie cDNA resource center (www.cdna.org).</title>
        <authorList>
            <person name="Puhl H.L. III"/>
            <person name="Ikeda S.R."/>
            <person name="Aronstam R.S."/>
        </authorList>
    </citation>
    <scope>NUCLEOTIDE SEQUENCE [LARGE SCALE MRNA]</scope>
    <source>
        <tissue>Lung</tissue>
    </source>
</reference>
<reference key="7">
    <citation type="journal article" date="2004" name="Nat. Genet.">
        <title>Complete sequencing and characterization of 21,243 full-length human cDNAs.</title>
        <authorList>
            <person name="Ota T."/>
            <person name="Suzuki Y."/>
            <person name="Nishikawa T."/>
            <person name="Otsuki T."/>
            <person name="Sugiyama T."/>
            <person name="Irie R."/>
            <person name="Wakamatsu A."/>
            <person name="Hayashi K."/>
            <person name="Sato H."/>
            <person name="Nagai K."/>
            <person name="Kimura K."/>
            <person name="Makita H."/>
            <person name="Sekine M."/>
            <person name="Obayashi M."/>
            <person name="Nishi T."/>
            <person name="Shibahara T."/>
            <person name="Tanaka T."/>
            <person name="Ishii S."/>
            <person name="Yamamoto J."/>
            <person name="Saito K."/>
            <person name="Kawai Y."/>
            <person name="Isono Y."/>
            <person name="Nakamura Y."/>
            <person name="Nagahari K."/>
            <person name="Murakami K."/>
            <person name="Yasuda T."/>
            <person name="Iwayanagi T."/>
            <person name="Wagatsuma M."/>
            <person name="Shiratori A."/>
            <person name="Sudo H."/>
            <person name="Hosoiri T."/>
            <person name="Kaku Y."/>
            <person name="Kodaira H."/>
            <person name="Kondo H."/>
            <person name="Sugawara M."/>
            <person name="Takahashi M."/>
            <person name="Kanda K."/>
            <person name="Yokoi T."/>
            <person name="Furuya T."/>
            <person name="Kikkawa E."/>
            <person name="Omura Y."/>
            <person name="Abe K."/>
            <person name="Kamihara K."/>
            <person name="Katsuta N."/>
            <person name="Sato K."/>
            <person name="Tanikawa M."/>
            <person name="Yamazaki M."/>
            <person name="Ninomiya K."/>
            <person name="Ishibashi T."/>
            <person name="Yamashita H."/>
            <person name="Murakawa K."/>
            <person name="Fujimori K."/>
            <person name="Tanai H."/>
            <person name="Kimata M."/>
            <person name="Watanabe M."/>
            <person name="Hiraoka S."/>
            <person name="Chiba Y."/>
            <person name="Ishida S."/>
            <person name="Ono Y."/>
            <person name="Takiguchi S."/>
            <person name="Watanabe S."/>
            <person name="Yosida M."/>
            <person name="Hotuta T."/>
            <person name="Kusano J."/>
            <person name="Kanehori K."/>
            <person name="Takahashi-Fujii A."/>
            <person name="Hara H."/>
            <person name="Tanase T.-O."/>
            <person name="Nomura Y."/>
            <person name="Togiya S."/>
            <person name="Komai F."/>
            <person name="Hara R."/>
            <person name="Takeuchi K."/>
            <person name="Arita M."/>
            <person name="Imose N."/>
            <person name="Musashino K."/>
            <person name="Yuuki H."/>
            <person name="Oshima A."/>
            <person name="Sasaki N."/>
            <person name="Aotsuka S."/>
            <person name="Yoshikawa Y."/>
            <person name="Matsunawa H."/>
            <person name="Ichihara T."/>
            <person name="Shiohata N."/>
            <person name="Sano S."/>
            <person name="Moriya S."/>
            <person name="Momiyama H."/>
            <person name="Satoh N."/>
            <person name="Takami S."/>
            <person name="Terashima Y."/>
            <person name="Suzuki O."/>
            <person name="Nakagawa S."/>
            <person name="Senoh A."/>
            <person name="Mizoguchi H."/>
            <person name="Goto Y."/>
            <person name="Shimizu F."/>
            <person name="Wakebe H."/>
            <person name="Hishigaki H."/>
            <person name="Watanabe T."/>
            <person name="Sugiyama A."/>
            <person name="Takemoto M."/>
            <person name="Kawakami B."/>
            <person name="Yamazaki M."/>
            <person name="Watanabe K."/>
            <person name="Kumagai A."/>
            <person name="Itakura S."/>
            <person name="Fukuzumi Y."/>
            <person name="Fujimori Y."/>
            <person name="Komiyama M."/>
            <person name="Tashiro H."/>
            <person name="Tanigami A."/>
            <person name="Fujiwara T."/>
            <person name="Ono T."/>
            <person name="Yamada K."/>
            <person name="Fujii Y."/>
            <person name="Ozaki K."/>
            <person name="Hirao M."/>
            <person name="Ohmori Y."/>
            <person name="Kawabata A."/>
            <person name="Hikiji T."/>
            <person name="Kobatake N."/>
            <person name="Inagaki H."/>
            <person name="Ikema Y."/>
            <person name="Okamoto S."/>
            <person name="Okitani R."/>
            <person name="Kawakami T."/>
            <person name="Noguchi S."/>
            <person name="Itoh T."/>
            <person name="Shigeta K."/>
            <person name="Senba T."/>
            <person name="Matsumura K."/>
            <person name="Nakajima Y."/>
            <person name="Mizuno T."/>
            <person name="Morinaga M."/>
            <person name="Sasaki M."/>
            <person name="Togashi T."/>
            <person name="Oyama M."/>
            <person name="Hata H."/>
            <person name="Watanabe M."/>
            <person name="Komatsu T."/>
            <person name="Mizushima-Sugano J."/>
            <person name="Satoh T."/>
            <person name="Shirai Y."/>
            <person name="Takahashi Y."/>
            <person name="Nakagawa K."/>
            <person name="Okumura K."/>
            <person name="Nagase T."/>
            <person name="Nomura N."/>
            <person name="Kikuchi H."/>
            <person name="Masuho Y."/>
            <person name="Yamashita R."/>
            <person name="Nakai K."/>
            <person name="Yada T."/>
            <person name="Nakamura Y."/>
            <person name="Ohara O."/>
            <person name="Isogai T."/>
            <person name="Sugano S."/>
        </authorList>
    </citation>
    <scope>NUCLEOTIDE SEQUENCE [LARGE SCALE MRNA]</scope>
</reference>
<reference key="8">
    <citation type="submission" date="2005-07" db="EMBL/GenBank/DDBJ databases">
        <authorList>
            <person name="Mural R.J."/>
            <person name="Istrail S."/>
            <person name="Sutton G.G."/>
            <person name="Florea L."/>
            <person name="Halpern A.L."/>
            <person name="Mobarry C.M."/>
            <person name="Lippert R."/>
            <person name="Walenz B."/>
            <person name="Shatkay H."/>
            <person name="Dew I."/>
            <person name="Miller J.R."/>
            <person name="Flanigan M.J."/>
            <person name="Edwards N.J."/>
            <person name="Bolanos R."/>
            <person name="Fasulo D."/>
            <person name="Halldorsson B.V."/>
            <person name="Hannenhalli S."/>
            <person name="Turner R."/>
            <person name="Yooseph S."/>
            <person name="Lu F."/>
            <person name="Nusskern D.R."/>
            <person name="Shue B.C."/>
            <person name="Zheng X.H."/>
            <person name="Zhong F."/>
            <person name="Delcher A.L."/>
            <person name="Huson D.H."/>
            <person name="Kravitz S.A."/>
            <person name="Mouchard L."/>
            <person name="Reinert K."/>
            <person name="Remington K.A."/>
            <person name="Clark A.G."/>
            <person name="Waterman M.S."/>
            <person name="Eichler E.E."/>
            <person name="Adams M.D."/>
            <person name="Hunkapiller M.W."/>
            <person name="Myers E.W."/>
            <person name="Venter J.C."/>
        </authorList>
    </citation>
    <scope>NUCLEOTIDE SEQUENCE [LARGE SCALE GENOMIC DNA]</scope>
</reference>
<reference key="9">
    <citation type="journal article" date="2004" name="Genome Res.">
        <title>The status, quality, and expansion of the NIH full-length cDNA project: the Mammalian Gene Collection (MGC).</title>
        <authorList>
            <consortium name="The MGC Project Team"/>
        </authorList>
    </citation>
    <scope>NUCLEOTIDE SEQUENCE [LARGE SCALE MRNA]</scope>
    <source>
        <tissue>Placenta</tissue>
    </source>
</reference>
<reference key="10">
    <citation type="journal article" date="2004" name="FEBS Lett.">
        <title>Two threonine residues and two serine residues in the second and third intracellular loops are both involved in histamine H1 receptor downregulation.</title>
        <authorList>
            <person name="Horio S."/>
            <person name="Kato T."/>
            <person name="Ogawa M."/>
            <person name="Fujimoto K."/>
            <person name="Fukui H."/>
        </authorList>
    </citation>
    <scope>PHOSPHORYLATION AT THR-140; THR-142; SER-396 AND SER-398</scope>
</reference>
<reference key="11">
    <citation type="journal article" date="2008" name="Mol. Cell">
        <title>Kinase-selective enrichment enables quantitative phosphoproteomics of the kinome across the cell cycle.</title>
        <authorList>
            <person name="Daub H."/>
            <person name="Olsen J.V."/>
            <person name="Bairlein M."/>
            <person name="Gnad F."/>
            <person name="Oppermann F.S."/>
            <person name="Korner R."/>
            <person name="Greff Z."/>
            <person name="Keri G."/>
            <person name="Stemmann O."/>
            <person name="Mann M."/>
        </authorList>
    </citation>
    <scope>IDENTIFICATION BY MASS SPECTROMETRY [LARGE SCALE ANALYSIS]</scope>
    <source>
        <tissue>Cervix carcinoma</tissue>
    </source>
</reference>
<reference key="12">
    <citation type="journal article" date="2008" name="Proc. Natl. Acad. Sci. U.S.A.">
        <title>A quantitative atlas of mitotic phosphorylation.</title>
        <authorList>
            <person name="Dephoure N."/>
            <person name="Zhou C."/>
            <person name="Villen J."/>
            <person name="Beausoleil S.A."/>
            <person name="Bakalarski C.E."/>
            <person name="Elledge S.J."/>
            <person name="Gygi S.P."/>
        </authorList>
    </citation>
    <scope>PHOSPHORYLATION [LARGE SCALE ANALYSIS] AT THR-279</scope>
    <scope>IDENTIFICATION BY MASS SPECTROMETRY [LARGE SCALE ANALYSIS]</scope>
    <source>
        <tissue>Cervix carcinoma</tissue>
    </source>
</reference>
<reference key="13">
    <citation type="journal article" date="2013" name="J. Proteome Res.">
        <title>Toward a comprehensive characterization of a human cancer cell phosphoproteome.</title>
        <authorList>
            <person name="Zhou H."/>
            <person name="Di Palma S."/>
            <person name="Preisinger C."/>
            <person name="Peng M."/>
            <person name="Polat A.N."/>
            <person name="Heck A.J."/>
            <person name="Mohammed S."/>
        </authorList>
    </citation>
    <scope>PHOSPHORYLATION [LARGE SCALE ANALYSIS] AT SER-230</scope>
    <scope>IDENTIFICATION BY MASS SPECTROMETRY [LARGE SCALE ANALYSIS]</scope>
    <source>
        <tissue>Cervix carcinoma</tissue>
    </source>
</reference>
<reference evidence="15" key="14">
    <citation type="journal article" date="2011" name="Nature">
        <title>Structure of the human histamine H1 receptor complex with doxepin.</title>
        <authorList>
            <person name="Shimamura T."/>
            <person name="Shiroishi M."/>
            <person name="Weyand S."/>
            <person name="Tsujimoto H."/>
            <person name="Winter G."/>
            <person name="Katritch V."/>
            <person name="Abagyan R."/>
            <person name="Cherezov V."/>
            <person name="Liu W."/>
            <person name="Han G.W."/>
            <person name="Kobayashi T."/>
            <person name="Stevens R.C."/>
            <person name="Iwata S."/>
        </authorList>
    </citation>
    <scope>X-RAY CRYSTALLOGRAPHY (3.1 ANGSTROMS) OF 20-487 IN COMPLEX WITH ANTAGONIST</scope>
    <scope>DISULFIDE BOND</scope>
    <scope>SUBCELLULAR LOCATION</scope>
    <scope>TOPOLOGY</scope>
    <scope>REGION</scope>
</reference>
<reference evidence="16" key="15">
    <citation type="journal article" date="2021" name="Nat. Commun.">
        <title>Cryo-EM structure of the human histamine H1 receptor/Gq complex.</title>
        <authorList>
            <person name="Xia R."/>
            <person name="Wang N."/>
            <person name="Xu Z."/>
            <person name="Lu Y."/>
            <person name="Song J."/>
            <person name="Zhang A."/>
            <person name="Guo C."/>
            <person name="He Y."/>
        </authorList>
    </citation>
    <scope>STRUCTURE BY ELECTRON MICROSCOPY (3.30 ANGSTROMS) IN COMPLEX WITH GNAQ; GNB1; GNG2 AND HISTAMINE</scope>
    <scope>MUTAGENESIS OF ARG-56; LYS-57; HIS-59; ASP-107; TYR-108; SER-111; THR-112; TYR-135; LYS-137; TRP-158; ASN-198; TRP-428; TYR-431; PHE-432; PHE-435; ILE-454 AND TYR-458</scope>
    <scope>TOPOLOGY</scope>
</reference>
<reference key="16">
    <citation type="journal article" date="2006" name="Science">
        <title>The consensus coding sequences of human breast and colorectal cancers.</title>
        <authorList>
            <person name="Sjoeblom T."/>
            <person name="Jones S."/>
            <person name="Wood L.D."/>
            <person name="Parsons D.W."/>
            <person name="Lin J."/>
            <person name="Barber T.D."/>
            <person name="Mandelker D."/>
            <person name="Leary R.J."/>
            <person name="Ptak J."/>
            <person name="Silliman N."/>
            <person name="Szabo S."/>
            <person name="Buckhaults P."/>
            <person name="Farrell C."/>
            <person name="Meeh P."/>
            <person name="Markowitz S.D."/>
            <person name="Willis J."/>
            <person name="Dawson D."/>
            <person name="Willson J.K.V."/>
            <person name="Gazdar A.F."/>
            <person name="Hartigan J."/>
            <person name="Wu L."/>
            <person name="Liu C."/>
            <person name="Parmigiani G."/>
            <person name="Park B.H."/>
            <person name="Bachman K.E."/>
            <person name="Papadopoulos N."/>
            <person name="Vogelstein B."/>
            <person name="Kinzler K.W."/>
            <person name="Velculescu V.E."/>
        </authorList>
    </citation>
    <scope>VARIANT [LARGE SCALE ANALYSIS] GLU-385</scope>
</reference>
<name>HRH1_HUMAN</name>
<evidence type="ECO:0000250" key="1">
    <source>
        <dbReference type="UniProtKB" id="P70174"/>
    </source>
</evidence>
<evidence type="ECO:0000255" key="2"/>
<evidence type="ECO:0000255" key="3">
    <source>
        <dbReference type="PROSITE-ProRule" id="PRU00521"/>
    </source>
</evidence>
<evidence type="ECO:0000256" key="4">
    <source>
        <dbReference type="SAM" id="MobiDB-lite"/>
    </source>
</evidence>
<evidence type="ECO:0000269" key="5">
    <source>
    </source>
</evidence>
<evidence type="ECO:0000269" key="6">
    <source>
    </source>
</evidence>
<evidence type="ECO:0000269" key="7">
    <source>
    </source>
</evidence>
<evidence type="ECO:0000269" key="8">
    <source>
    </source>
</evidence>
<evidence type="ECO:0000269" key="9">
    <source>
    </source>
</evidence>
<evidence type="ECO:0000303" key="10">
    <source>
    </source>
</evidence>
<evidence type="ECO:0000303" key="11">
    <source>
    </source>
</evidence>
<evidence type="ECO:0000305" key="12"/>
<evidence type="ECO:0000305" key="13">
    <source>
    </source>
</evidence>
<evidence type="ECO:0000312" key="14">
    <source>
        <dbReference type="HGNC" id="HGNC:5182"/>
    </source>
</evidence>
<evidence type="ECO:0007744" key="15">
    <source>
        <dbReference type="PDB" id="3RZE"/>
    </source>
</evidence>
<evidence type="ECO:0007744" key="16">
    <source>
        <dbReference type="PDB" id="7DFL"/>
    </source>
</evidence>
<evidence type="ECO:0007744" key="17">
    <source>
    </source>
</evidence>
<evidence type="ECO:0007744" key="18">
    <source>
    </source>
</evidence>
<evidence type="ECO:0007829" key="19">
    <source>
        <dbReference type="PDB" id="3RZE"/>
    </source>
</evidence>
<evidence type="ECO:0007829" key="20">
    <source>
        <dbReference type="PDB" id="7DFL"/>
    </source>
</evidence>
<evidence type="ECO:0007829" key="21">
    <source>
        <dbReference type="PDB" id="8YN2"/>
    </source>
</evidence>